<sequence>MPLVSMTEMLNTAKEKGYAVGQFNLNNLEFTQAILQAAEEEKSPVILGVSEGAGRYMGGFKTVVAMVKALMEEYKVTVPVAIHLDHGSSFESCAKAIHAGFTSVMIDASHHPFEENVATTAKVVELAHFHGVSVEAELGTVGGQEDDVIAEGVIYADPKECQELVERTGIDCLAPALGSVHGPYKGEPNLGFKEMEEIGKSTGLPLVLHGGTGIPTADIKKSISLGTAKINVNTENQISSAKAVRETLAAKPDEYDPRKYLGPAREAIKETVIGKMREFGSSNQA</sequence>
<protein>
    <recommendedName>
        <fullName>Probable fructose-bisphosphate aldolase</fullName>
        <shortName>FBP aldolase</shortName>
        <shortName>FBPA</shortName>
        <ecNumber>4.1.2.13</ecNumber>
    </recommendedName>
    <alternativeName>
        <fullName>Fructose-1,6-bisphosphate aldolase</fullName>
    </alternativeName>
</protein>
<proteinExistence type="evidence at protein level"/>
<accession>P13243</accession>
<feature type="chain" id="PRO_0000178705" description="Probable fructose-bisphosphate aldolase">
    <location>
        <begin position="1"/>
        <end position="285"/>
    </location>
</feature>
<feature type="active site" description="Proton donor" evidence="1">
    <location>
        <position position="85"/>
    </location>
</feature>
<feature type="binding site" evidence="1">
    <location>
        <position position="50"/>
    </location>
    <ligand>
        <name>D-glyceraldehyde 3-phosphate</name>
        <dbReference type="ChEBI" id="CHEBI:59776"/>
    </ligand>
</feature>
<feature type="binding site" evidence="1">
    <location>
        <position position="86"/>
    </location>
    <ligand>
        <name>Zn(2+)</name>
        <dbReference type="ChEBI" id="CHEBI:29105"/>
        <label>1</label>
        <note>catalytic</note>
    </ligand>
</feature>
<feature type="binding site" evidence="1">
    <location>
        <position position="107"/>
    </location>
    <ligand>
        <name>Zn(2+)</name>
        <dbReference type="ChEBI" id="CHEBI:29105"/>
        <label>2</label>
    </ligand>
</feature>
<feature type="binding site" evidence="1">
    <location>
        <position position="137"/>
    </location>
    <ligand>
        <name>Zn(2+)</name>
        <dbReference type="ChEBI" id="CHEBI:29105"/>
        <label>2</label>
    </ligand>
</feature>
<feature type="binding site" evidence="1">
    <location>
        <position position="181"/>
    </location>
    <ligand>
        <name>Zn(2+)</name>
        <dbReference type="ChEBI" id="CHEBI:29105"/>
        <label>1</label>
        <note>catalytic</note>
    </ligand>
</feature>
<feature type="binding site" evidence="1">
    <location>
        <position position="182"/>
    </location>
    <ligand>
        <name>dihydroxyacetone phosphate</name>
        <dbReference type="ChEBI" id="CHEBI:57642"/>
    </ligand>
</feature>
<feature type="binding site" evidence="1">
    <location>
        <position position="209"/>
    </location>
    <ligand>
        <name>Zn(2+)</name>
        <dbReference type="ChEBI" id="CHEBI:29105"/>
        <label>1</label>
        <note>catalytic</note>
    </ligand>
</feature>
<feature type="binding site" evidence="1">
    <location>
        <begin position="210"/>
        <end position="212"/>
    </location>
    <ligand>
        <name>dihydroxyacetone phosphate</name>
        <dbReference type="ChEBI" id="CHEBI:57642"/>
    </ligand>
</feature>
<feature type="binding site" evidence="1">
    <location>
        <begin position="231"/>
        <end position="234"/>
    </location>
    <ligand>
        <name>dihydroxyacetone phosphate</name>
        <dbReference type="ChEBI" id="CHEBI:57642"/>
    </ligand>
</feature>
<feature type="modified residue" description="Phosphothreonine" evidence="3">
    <location>
        <position position="212"/>
    </location>
</feature>
<feature type="modified residue" description="Phosphothreonine" evidence="3">
    <location>
        <position position="234"/>
    </location>
</feature>
<reference key="1">
    <citation type="journal article" date="1988" name="J. Bacteriol.">
        <title>Complete sequence and transcriptional analysis of the spo0F region of the Bacillus subtilis chromosome.</title>
        <authorList>
            <person name="Trach K."/>
            <person name="Chapman J.W."/>
            <person name="Piggot P.J."/>
            <person name="Lecoq D."/>
            <person name="Hoch J.A."/>
        </authorList>
    </citation>
    <scope>NUCLEOTIDE SEQUENCE [GENOMIC DNA]</scope>
    <source>
        <strain>168 / JH642</strain>
    </source>
</reference>
<reference key="2">
    <citation type="journal article" date="1992" name="Mol. Microbiol.">
        <title>The amino acid sequence of a Bacillus subtilis phosphoprotein that matches an orfY-tsr coding sequence.</title>
        <authorList>
            <person name="Mitchell C."/>
            <person name="Morris P.W."/>
            <person name="Lum L."/>
            <person name="Spiegelman G."/>
            <person name="Vary J.C."/>
        </authorList>
    </citation>
    <scope>NUCLEOTIDE SEQUENCE [GENOMIC DNA] OF 1-26</scope>
    <scope>SEQUENCE REVISION</scope>
    <source>
        <strain>168 / JH642</strain>
    </source>
</reference>
<reference key="3">
    <citation type="journal article" date="1997" name="Microbiology">
        <title>The Bacillus subtilis genome from gerBC (311 degrees) to licR (334 degrees).</title>
        <authorList>
            <person name="Presecan E."/>
            <person name="Moszer I."/>
            <person name="Boursier L."/>
            <person name="Cruz Ramos H."/>
            <person name="De La Fuente V."/>
            <person name="Hullo M.-F."/>
            <person name="Lelong C."/>
            <person name="Schleich S."/>
            <person name="Sekowska A."/>
            <person name="Song B.H."/>
            <person name="Villani G."/>
            <person name="Kunst F."/>
            <person name="Danchin A."/>
            <person name="Glaser P."/>
        </authorList>
    </citation>
    <scope>NUCLEOTIDE SEQUENCE [GENOMIC DNA]</scope>
    <source>
        <strain>168</strain>
    </source>
</reference>
<reference key="4">
    <citation type="journal article" date="1997" name="Nature">
        <title>The complete genome sequence of the Gram-positive bacterium Bacillus subtilis.</title>
        <authorList>
            <person name="Kunst F."/>
            <person name="Ogasawara N."/>
            <person name="Moszer I."/>
            <person name="Albertini A.M."/>
            <person name="Alloni G."/>
            <person name="Azevedo V."/>
            <person name="Bertero M.G."/>
            <person name="Bessieres P."/>
            <person name="Bolotin A."/>
            <person name="Borchert S."/>
            <person name="Borriss R."/>
            <person name="Boursier L."/>
            <person name="Brans A."/>
            <person name="Braun M."/>
            <person name="Brignell S.C."/>
            <person name="Bron S."/>
            <person name="Brouillet S."/>
            <person name="Bruschi C.V."/>
            <person name="Caldwell B."/>
            <person name="Capuano V."/>
            <person name="Carter N.M."/>
            <person name="Choi S.-K."/>
            <person name="Codani J.-J."/>
            <person name="Connerton I.F."/>
            <person name="Cummings N.J."/>
            <person name="Daniel R.A."/>
            <person name="Denizot F."/>
            <person name="Devine K.M."/>
            <person name="Duesterhoeft A."/>
            <person name="Ehrlich S.D."/>
            <person name="Emmerson P.T."/>
            <person name="Entian K.-D."/>
            <person name="Errington J."/>
            <person name="Fabret C."/>
            <person name="Ferrari E."/>
            <person name="Foulger D."/>
            <person name="Fritz C."/>
            <person name="Fujita M."/>
            <person name="Fujita Y."/>
            <person name="Fuma S."/>
            <person name="Galizzi A."/>
            <person name="Galleron N."/>
            <person name="Ghim S.-Y."/>
            <person name="Glaser P."/>
            <person name="Goffeau A."/>
            <person name="Golightly E.J."/>
            <person name="Grandi G."/>
            <person name="Guiseppi G."/>
            <person name="Guy B.J."/>
            <person name="Haga K."/>
            <person name="Haiech J."/>
            <person name="Harwood C.R."/>
            <person name="Henaut A."/>
            <person name="Hilbert H."/>
            <person name="Holsappel S."/>
            <person name="Hosono S."/>
            <person name="Hullo M.-F."/>
            <person name="Itaya M."/>
            <person name="Jones L.-M."/>
            <person name="Joris B."/>
            <person name="Karamata D."/>
            <person name="Kasahara Y."/>
            <person name="Klaerr-Blanchard M."/>
            <person name="Klein C."/>
            <person name="Kobayashi Y."/>
            <person name="Koetter P."/>
            <person name="Koningstein G."/>
            <person name="Krogh S."/>
            <person name="Kumano M."/>
            <person name="Kurita K."/>
            <person name="Lapidus A."/>
            <person name="Lardinois S."/>
            <person name="Lauber J."/>
            <person name="Lazarevic V."/>
            <person name="Lee S.-M."/>
            <person name="Levine A."/>
            <person name="Liu H."/>
            <person name="Masuda S."/>
            <person name="Mauel C."/>
            <person name="Medigue C."/>
            <person name="Medina N."/>
            <person name="Mellado R.P."/>
            <person name="Mizuno M."/>
            <person name="Moestl D."/>
            <person name="Nakai S."/>
            <person name="Noback M."/>
            <person name="Noone D."/>
            <person name="O'Reilly M."/>
            <person name="Ogawa K."/>
            <person name="Ogiwara A."/>
            <person name="Oudega B."/>
            <person name="Park S.-H."/>
            <person name="Parro V."/>
            <person name="Pohl T.M."/>
            <person name="Portetelle D."/>
            <person name="Porwollik S."/>
            <person name="Prescott A.M."/>
            <person name="Presecan E."/>
            <person name="Pujic P."/>
            <person name="Purnelle B."/>
            <person name="Rapoport G."/>
            <person name="Rey M."/>
            <person name="Reynolds S."/>
            <person name="Rieger M."/>
            <person name="Rivolta C."/>
            <person name="Rocha E."/>
            <person name="Roche B."/>
            <person name="Rose M."/>
            <person name="Sadaie Y."/>
            <person name="Sato T."/>
            <person name="Scanlan E."/>
            <person name="Schleich S."/>
            <person name="Schroeter R."/>
            <person name="Scoffone F."/>
            <person name="Sekiguchi J."/>
            <person name="Sekowska A."/>
            <person name="Seror S.J."/>
            <person name="Serror P."/>
            <person name="Shin B.-S."/>
            <person name="Soldo B."/>
            <person name="Sorokin A."/>
            <person name="Tacconi E."/>
            <person name="Takagi T."/>
            <person name="Takahashi H."/>
            <person name="Takemaru K."/>
            <person name="Takeuchi M."/>
            <person name="Tamakoshi A."/>
            <person name="Tanaka T."/>
            <person name="Terpstra P."/>
            <person name="Tognoni A."/>
            <person name="Tosato V."/>
            <person name="Uchiyama S."/>
            <person name="Vandenbol M."/>
            <person name="Vannier F."/>
            <person name="Vassarotti A."/>
            <person name="Viari A."/>
            <person name="Wambutt R."/>
            <person name="Wedler E."/>
            <person name="Wedler H."/>
            <person name="Weitzenegger T."/>
            <person name="Winters P."/>
            <person name="Wipat A."/>
            <person name="Yamamoto H."/>
            <person name="Yamane K."/>
            <person name="Yasumoto K."/>
            <person name="Yata K."/>
            <person name="Yoshida K."/>
            <person name="Yoshikawa H.-F."/>
            <person name="Zumstein E."/>
            <person name="Yoshikawa H."/>
            <person name="Danchin A."/>
        </authorList>
    </citation>
    <scope>NUCLEOTIDE SEQUENCE [LARGE SCALE GENOMIC DNA]</scope>
    <source>
        <strain>168</strain>
    </source>
</reference>
<reference key="5">
    <citation type="journal article" date="1992" name="J. Bacteriol.">
        <title>Identification of proteins phosphorylated by ATP during sporulation of Bacillus subtilis.</title>
        <authorList>
            <person name="Mitchell C."/>
            <person name="Morris P.W."/>
            <person name="Vary J.C."/>
        </authorList>
    </citation>
    <scope>PROTEIN SEQUENCE OF 1-16</scope>
    <scope>PHOSPHORYLATION</scope>
    <source>
        <strain>168 / DB100</strain>
    </source>
</reference>
<reference key="6">
    <citation type="journal article" date="2007" name="Mol. Cell. Proteomics">
        <title>The serine/threonine/tyrosine phosphoproteome of the model bacterium Bacillus subtilis.</title>
        <authorList>
            <person name="Macek B."/>
            <person name="Mijakovic I."/>
            <person name="Olsen J.V."/>
            <person name="Gnad F."/>
            <person name="Kumar C."/>
            <person name="Jensen P.R."/>
            <person name="Mann M."/>
        </authorList>
    </citation>
    <scope>PHOSPHORYLATION [LARGE SCALE ANALYSIS] AT THR-212 AND THR-234</scope>
    <scope>IDENTIFICATION BY MASS SPECTROMETRY</scope>
    <source>
        <strain>168</strain>
    </source>
</reference>
<gene>
    <name type="primary">fbaA</name>
    <name type="synonym">fba</name>
    <name type="synonym">fba1</name>
    <name evidence="4" type="synonym">orfY-tsr</name>
    <name type="ordered locus">BSU37120</name>
</gene>
<keyword id="KW-0903">Direct protein sequencing</keyword>
<keyword id="KW-0324">Glycolysis</keyword>
<keyword id="KW-0456">Lyase</keyword>
<keyword id="KW-0479">Metal-binding</keyword>
<keyword id="KW-0597">Phosphoprotein</keyword>
<keyword id="KW-1185">Reference proteome</keyword>
<keyword id="KW-0749">Sporulation</keyword>
<keyword id="KW-0862">Zinc</keyword>
<comment type="function">
    <text evidence="1">Catalyzes the aldol condensation of dihydroxyacetone phosphate (DHAP or glycerone-phosphate) with glyceraldehyde 3-phosphate (G3P) to form fructose 1,6-bisphosphate (FBP) in gluconeogenesis and the reverse reaction in glycolysis.</text>
</comment>
<comment type="catalytic activity">
    <reaction>
        <text>beta-D-fructose 1,6-bisphosphate = D-glyceraldehyde 3-phosphate + dihydroxyacetone phosphate</text>
        <dbReference type="Rhea" id="RHEA:14729"/>
        <dbReference type="ChEBI" id="CHEBI:32966"/>
        <dbReference type="ChEBI" id="CHEBI:57642"/>
        <dbReference type="ChEBI" id="CHEBI:59776"/>
        <dbReference type="EC" id="4.1.2.13"/>
    </reaction>
</comment>
<comment type="cofactor">
    <cofactor evidence="1">
        <name>Zn(2+)</name>
        <dbReference type="ChEBI" id="CHEBI:29105"/>
    </cofactor>
    <text evidence="1">Binds 2 Zn(2+) ions per subunit. One is catalytic and the other provides a structural contribution.</text>
</comment>
<comment type="pathway">
    <text>Carbohydrate degradation; glycolysis; D-glyceraldehyde 3-phosphate and glycerone phosphate from D-glucose: step 4/4.</text>
</comment>
<comment type="PTM">
    <text evidence="2 3">Phosphorylated during sporulation.</text>
</comment>
<comment type="similarity">
    <text evidence="5">Belongs to the class II fructose-bisphosphate aldolase family.</text>
</comment>
<organism>
    <name type="scientific">Bacillus subtilis (strain 168)</name>
    <dbReference type="NCBI Taxonomy" id="224308"/>
    <lineage>
        <taxon>Bacteria</taxon>
        <taxon>Bacillati</taxon>
        <taxon>Bacillota</taxon>
        <taxon>Bacilli</taxon>
        <taxon>Bacillales</taxon>
        <taxon>Bacillaceae</taxon>
        <taxon>Bacillus</taxon>
    </lineage>
</organism>
<name>ALF_BACSU</name>
<dbReference type="EC" id="4.1.2.13"/>
<dbReference type="EMBL" id="M22039">
    <property type="protein sequence ID" value="AAA16803.1"/>
    <property type="molecule type" value="Unassigned_DNA"/>
</dbReference>
<dbReference type="EMBL" id="S42590">
    <property type="protein sequence ID" value="AAB22716.1"/>
    <property type="molecule type" value="Genomic_DNA"/>
</dbReference>
<dbReference type="EMBL" id="Z49782">
    <property type="protein sequence ID" value="CAA89873.1"/>
    <property type="molecule type" value="Genomic_DNA"/>
</dbReference>
<dbReference type="EMBL" id="AL009126">
    <property type="protein sequence ID" value="CAB15729.1"/>
    <property type="molecule type" value="Genomic_DNA"/>
</dbReference>
<dbReference type="PIR" id="S55426">
    <property type="entry name" value="D32354"/>
</dbReference>
<dbReference type="RefSeq" id="NP_391593.1">
    <property type="nucleotide sequence ID" value="NC_000964.3"/>
</dbReference>
<dbReference type="RefSeq" id="WP_003243339.1">
    <property type="nucleotide sequence ID" value="NZ_OZ025638.1"/>
</dbReference>
<dbReference type="SMR" id="P13243"/>
<dbReference type="FunCoup" id="P13243">
    <property type="interactions" value="667"/>
</dbReference>
<dbReference type="IntAct" id="P13243">
    <property type="interactions" value="1"/>
</dbReference>
<dbReference type="MINT" id="P13243"/>
<dbReference type="STRING" id="224308.BSU37120"/>
<dbReference type="iPTMnet" id="P13243"/>
<dbReference type="jPOST" id="P13243"/>
<dbReference type="PaxDb" id="224308-BSU37120"/>
<dbReference type="EnsemblBacteria" id="CAB15729">
    <property type="protein sequence ID" value="CAB15729"/>
    <property type="gene ID" value="BSU_37120"/>
</dbReference>
<dbReference type="GeneID" id="937040"/>
<dbReference type="KEGG" id="bsu:BSU37120"/>
<dbReference type="PATRIC" id="fig|224308.179.peg.4021"/>
<dbReference type="eggNOG" id="COG0191">
    <property type="taxonomic scope" value="Bacteria"/>
</dbReference>
<dbReference type="InParanoid" id="P13243"/>
<dbReference type="OrthoDB" id="9803995at2"/>
<dbReference type="PhylomeDB" id="P13243"/>
<dbReference type="BioCyc" id="BSUB:BSU37120-MONOMER"/>
<dbReference type="SABIO-RK" id="P13243"/>
<dbReference type="UniPathway" id="UPA00109">
    <property type="reaction ID" value="UER00183"/>
</dbReference>
<dbReference type="Proteomes" id="UP000001570">
    <property type="component" value="Chromosome"/>
</dbReference>
<dbReference type="GO" id="GO:0004332">
    <property type="term" value="F:fructose-bisphosphate aldolase activity"/>
    <property type="evidence" value="ECO:0007669"/>
    <property type="project" value="UniProtKB-EC"/>
</dbReference>
<dbReference type="GO" id="GO:0008270">
    <property type="term" value="F:zinc ion binding"/>
    <property type="evidence" value="ECO:0007669"/>
    <property type="project" value="InterPro"/>
</dbReference>
<dbReference type="GO" id="GO:0030388">
    <property type="term" value="P:fructose 1,6-bisphosphate metabolic process"/>
    <property type="evidence" value="ECO:0007669"/>
    <property type="project" value="InterPro"/>
</dbReference>
<dbReference type="GO" id="GO:0006096">
    <property type="term" value="P:glycolytic process"/>
    <property type="evidence" value="ECO:0007669"/>
    <property type="project" value="UniProtKB-UniPathway"/>
</dbReference>
<dbReference type="GO" id="GO:0030435">
    <property type="term" value="P:sporulation resulting in formation of a cellular spore"/>
    <property type="evidence" value="ECO:0007669"/>
    <property type="project" value="UniProtKB-KW"/>
</dbReference>
<dbReference type="CDD" id="cd00947">
    <property type="entry name" value="TBP_aldolase_IIB"/>
    <property type="match status" value="1"/>
</dbReference>
<dbReference type="Gene3D" id="3.20.20.70">
    <property type="entry name" value="Aldolase class I"/>
    <property type="match status" value="1"/>
</dbReference>
<dbReference type="InterPro" id="IPR013785">
    <property type="entry name" value="Aldolase_TIM"/>
</dbReference>
<dbReference type="InterPro" id="IPR050246">
    <property type="entry name" value="Class_II_FBP_aldolase"/>
</dbReference>
<dbReference type="InterPro" id="IPR000771">
    <property type="entry name" value="FBA_II"/>
</dbReference>
<dbReference type="InterPro" id="IPR011289">
    <property type="entry name" value="Fruc_bis_ald_class-2"/>
</dbReference>
<dbReference type="NCBIfam" id="TIGR00167">
    <property type="entry name" value="cbbA"/>
    <property type="match status" value="1"/>
</dbReference>
<dbReference type="NCBIfam" id="TIGR01859">
    <property type="entry name" value="fruc_bis_ald"/>
    <property type="match status" value="1"/>
</dbReference>
<dbReference type="NCBIfam" id="NF006376">
    <property type="entry name" value="PRK08610.1"/>
    <property type="match status" value="1"/>
</dbReference>
<dbReference type="PANTHER" id="PTHR30304">
    <property type="entry name" value="D-TAGATOSE-1,6-BISPHOSPHATE ALDOLASE"/>
    <property type="match status" value="1"/>
</dbReference>
<dbReference type="PANTHER" id="PTHR30304:SF0">
    <property type="entry name" value="D-TAGATOSE-1,6-BISPHOSPHATE ALDOLASE SUBUNIT GATY-RELATED"/>
    <property type="match status" value="1"/>
</dbReference>
<dbReference type="Pfam" id="PF01116">
    <property type="entry name" value="F_bP_aldolase"/>
    <property type="match status" value="1"/>
</dbReference>
<dbReference type="PIRSF" id="PIRSF001359">
    <property type="entry name" value="F_bP_aldolase_II"/>
    <property type="match status" value="1"/>
</dbReference>
<dbReference type="SUPFAM" id="SSF51569">
    <property type="entry name" value="Aldolase"/>
    <property type="match status" value="1"/>
</dbReference>
<dbReference type="PROSITE" id="PS00602">
    <property type="entry name" value="ALDOLASE_CLASS_II_1"/>
    <property type="match status" value="1"/>
</dbReference>
<dbReference type="PROSITE" id="PS00806">
    <property type="entry name" value="ALDOLASE_CLASS_II_2"/>
    <property type="match status" value="1"/>
</dbReference>
<evidence type="ECO:0000250" key="1"/>
<evidence type="ECO:0000269" key="2">
    <source>
    </source>
</evidence>
<evidence type="ECO:0000269" key="3">
    <source>
    </source>
</evidence>
<evidence type="ECO:0000303" key="4">
    <source>
    </source>
</evidence>
<evidence type="ECO:0000305" key="5"/>